<dbReference type="EC" id="2.7.7.50"/>
<dbReference type="EC" id="2.1.1.56"/>
<dbReference type="EMBL" id="AF403398">
    <property type="protein sequence ID" value="AAM92744.1"/>
    <property type="molecule type" value="Genomic_RNA"/>
</dbReference>
<dbReference type="RefSeq" id="NP_938060.1">
    <property type="nucleotide sequence ID" value="NC_005166.1"/>
</dbReference>
<dbReference type="PDB" id="8FJK">
    <property type="method" value="EM"/>
    <property type="resolution" value="3.30 A"/>
    <property type="chains" value="Y/Z/c/f/i=2-1298"/>
</dbReference>
<dbReference type="PDB" id="8FJL">
    <property type="method" value="EM"/>
    <property type="resolution" value="3.27 A"/>
    <property type="chains" value="Y/Z/c/f/i=2-1298"/>
</dbReference>
<dbReference type="PDBsum" id="8FJK"/>
<dbReference type="PDBsum" id="8FJL"/>
<dbReference type="EMDB" id="EMD-29243"/>
<dbReference type="EMDB" id="EMD-29244"/>
<dbReference type="SMR" id="Q8JU62"/>
<dbReference type="KEGG" id="vg:2648329"/>
<dbReference type="Proteomes" id="UP000006713">
    <property type="component" value="Genome"/>
</dbReference>
<dbReference type="GO" id="GO:0039624">
    <property type="term" value="C:viral outer capsid"/>
    <property type="evidence" value="ECO:0007669"/>
    <property type="project" value="UniProtKB-KW"/>
</dbReference>
<dbReference type="GO" id="GO:0005524">
    <property type="term" value="F:ATP binding"/>
    <property type="evidence" value="ECO:0007669"/>
    <property type="project" value="UniProtKB-KW"/>
</dbReference>
<dbReference type="GO" id="GO:0005525">
    <property type="term" value="F:GTP binding"/>
    <property type="evidence" value="ECO:0007669"/>
    <property type="project" value="UniProtKB-KW"/>
</dbReference>
<dbReference type="GO" id="GO:0004482">
    <property type="term" value="F:mRNA 5'-cap (guanine-N7-)-methyltransferase activity"/>
    <property type="evidence" value="ECO:0007669"/>
    <property type="project" value="UniProtKB-EC"/>
</dbReference>
<dbReference type="GO" id="GO:0004484">
    <property type="term" value="F:mRNA guanylyltransferase activity"/>
    <property type="evidence" value="ECO:0007669"/>
    <property type="project" value="UniProtKB-EC"/>
</dbReference>
<dbReference type="Gene3D" id="2.60.40.10">
    <property type="entry name" value="Immunoglobulins"/>
    <property type="match status" value="1"/>
</dbReference>
<dbReference type="Gene3D" id="3.55.60.10">
    <property type="entry name" value="Reovirus components"/>
    <property type="match status" value="1"/>
</dbReference>
<dbReference type="Gene3D" id="3.90.1810.10">
    <property type="entry name" value="Reovirus components"/>
    <property type="match status" value="1"/>
</dbReference>
<dbReference type="Gene3D" id="3.40.50.10760">
    <property type="entry name" value="Reovirus core"/>
    <property type="match status" value="1"/>
</dbReference>
<dbReference type="Gene3D" id="3.40.50.150">
    <property type="entry name" value="Vaccinia Virus protein VP39"/>
    <property type="match status" value="1"/>
</dbReference>
<dbReference type="InterPro" id="IPR013783">
    <property type="entry name" value="Ig-like_fold"/>
</dbReference>
<dbReference type="InterPro" id="IPR010311">
    <property type="entry name" value="Reovirus_L2"/>
</dbReference>
<dbReference type="InterPro" id="IPR048604">
    <property type="entry name" value="Reovirus_L2_4th"/>
</dbReference>
<dbReference type="InterPro" id="IPR048603">
    <property type="entry name" value="Reovirus_L2_6th"/>
</dbReference>
<dbReference type="InterPro" id="IPR048602">
    <property type="entry name" value="Reovirus_L2_7th"/>
</dbReference>
<dbReference type="InterPro" id="IPR048294">
    <property type="entry name" value="Reovirus_L2_8th"/>
</dbReference>
<dbReference type="InterPro" id="IPR048601">
    <property type="entry name" value="Reovirus_L2_GTase"/>
</dbReference>
<dbReference type="InterPro" id="IPR048598">
    <property type="entry name" value="Reovirus_L2_MT1"/>
</dbReference>
<dbReference type="InterPro" id="IPR048597">
    <property type="entry name" value="Reovirus_L2_MT2"/>
</dbReference>
<dbReference type="InterPro" id="IPR048596">
    <property type="entry name" value="Reovirus_L2_N"/>
</dbReference>
<dbReference type="InterPro" id="IPR029063">
    <property type="entry name" value="SAM-dependent_MTases_sf"/>
</dbReference>
<dbReference type="Pfam" id="PF21062">
    <property type="entry name" value="Reovirus_L2_4th"/>
    <property type="match status" value="1"/>
</dbReference>
<dbReference type="Pfam" id="PF21060">
    <property type="entry name" value="Reovirus_L2_6th"/>
    <property type="match status" value="1"/>
</dbReference>
<dbReference type="Pfam" id="PF21061">
    <property type="entry name" value="Reovirus_L2_7th"/>
    <property type="match status" value="1"/>
</dbReference>
<dbReference type="Pfam" id="PF06016">
    <property type="entry name" value="Reovirus_L2_8th"/>
    <property type="match status" value="1"/>
</dbReference>
<dbReference type="Pfam" id="PF21063">
    <property type="entry name" value="Reovirus_L2_GTase"/>
    <property type="match status" value="1"/>
</dbReference>
<dbReference type="Pfam" id="PF21065">
    <property type="entry name" value="Reovirus_L2_MT1"/>
    <property type="match status" value="1"/>
</dbReference>
<dbReference type="Pfam" id="PF21066">
    <property type="entry name" value="Reovirus_L2_MT2"/>
    <property type="match status" value="1"/>
</dbReference>
<dbReference type="Pfam" id="PF21064">
    <property type="entry name" value="Reovirus_L2_N"/>
    <property type="match status" value="1"/>
</dbReference>
<dbReference type="PIRSF" id="PIRSF000845">
    <property type="entry name" value="Reovirus_L2"/>
    <property type="match status" value="1"/>
</dbReference>
<reference key="1">
    <citation type="journal article" date="2002" name="J. Gen. Virol.">
        <title>Common evolutionary origin of aquareoviruses and orthoreoviruses revealed by genome characterization of Golden shiner reovirus, Grass carp reovirus, Striped bass reovirus and golden ide reovirus (genus Aquareovirus, family Reoviridae).</title>
        <authorList>
            <person name="Attoui H."/>
            <person name="Fang Q."/>
            <person name="Mohd Jaafar F."/>
            <person name="Cantaloube J.F."/>
            <person name="Biagini P."/>
            <person name="de Micco P."/>
            <person name="de Lamballerie X."/>
        </authorList>
    </citation>
    <scope>NUCLEOTIDE SEQUENCE [GENOMIC RNA]</scope>
</reference>
<gene>
    <name type="primary">S1</name>
</gene>
<name>VP1_AQRVC</name>
<accession>Q8JU62</accession>
<keyword id="KW-0002">3D-structure</keyword>
<keyword id="KW-0067">ATP-binding</keyword>
<keyword id="KW-0167">Capsid protein</keyword>
<keyword id="KW-0342">GTP-binding</keyword>
<keyword id="KW-0489">Methyltransferase</keyword>
<keyword id="KW-0506">mRNA capping</keyword>
<keyword id="KW-0507">mRNA processing</keyword>
<keyword id="KW-0511">Multifunctional enzyme</keyword>
<keyword id="KW-0547">Nucleotide-binding</keyword>
<keyword id="KW-1152">Outer capsid protein</keyword>
<keyword id="KW-1185">Reference proteome</keyword>
<keyword id="KW-0949">S-adenosyl-L-methionine</keyword>
<keyword id="KW-0808">Transferase</keyword>
<keyword id="KW-0946">Virion</keyword>
<organism>
    <name type="scientific">Aquareovirus C (isolate Golden shiner/USA/GSRV/1977)</name>
    <name type="common">AQRV-C</name>
    <dbReference type="NCBI Taxonomy" id="185783"/>
    <lineage>
        <taxon>Viruses</taxon>
        <taxon>Riboviria</taxon>
        <taxon>Orthornavirae</taxon>
        <taxon>Duplornaviricota</taxon>
        <taxon>Resentoviricetes</taxon>
        <taxon>Reovirales</taxon>
        <taxon>Spinareoviridae</taxon>
        <taxon>Aquareovirus</taxon>
        <taxon>Aquareovirus ctenopharyngodontis</taxon>
    </lineage>
</organism>
<protein>
    <recommendedName>
        <fullName>Outer capsid protein VP1</fullName>
    </recommendedName>
    <domain>
        <recommendedName>
            <fullName>mRNA guanylyltransferase</fullName>
            <ecNumber>2.7.7.50</ecNumber>
        </recommendedName>
    </domain>
    <domain>
        <recommendedName>
            <fullName>mRNA (guanine-N(7))-methyltransferase</fullName>
            <ecNumber>2.1.1.56</ecNumber>
        </recommendedName>
    </domain>
</protein>
<comment type="function">
    <text evidence="1">Outer capsid protein involved in mRNA capping. Catalyzes the last 3 enzymatic activities for formation of the 5' cap structure on the viral plus-strand transcripts, namely the RNA guanylyltransferase, RNA-7N- and RNA-2'O-methyltransferase activities (By similarity).</text>
</comment>
<comment type="catalytic activity">
    <reaction>
        <text>a 5'-end diphospho-ribonucleoside in mRNA + GTP + H(+) = a 5'-end (5'-triphosphoguanosine)-ribonucleoside in mRNA + diphosphate</text>
        <dbReference type="Rhea" id="RHEA:67012"/>
        <dbReference type="Rhea" id="RHEA-COMP:17165"/>
        <dbReference type="Rhea" id="RHEA-COMP:17166"/>
        <dbReference type="ChEBI" id="CHEBI:15378"/>
        <dbReference type="ChEBI" id="CHEBI:33019"/>
        <dbReference type="ChEBI" id="CHEBI:37565"/>
        <dbReference type="ChEBI" id="CHEBI:167616"/>
        <dbReference type="ChEBI" id="CHEBI:167617"/>
        <dbReference type="EC" id="2.7.7.50"/>
    </reaction>
</comment>
<comment type="catalytic activity">
    <reaction>
        <text>a 5'-end (5'-triphosphoguanosine)-ribonucleoside in mRNA + S-adenosyl-L-methionine = a 5'-end (N(7)-methyl 5'-triphosphoguanosine)-ribonucleoside in mRNA + S-adenosyl-L-homocysteine</text>
        <dbReference type="Rhea" id="RHEA:67008"/>
        <dbReference type="Rhea" id="RHEA-COMP:17166"/>
        <dbReference type="Rhea" id="RHEA-COMP:17167"/>
        <dbReference type="ChEBI" id="CHEBI:57856"/>
        <dbReference type="ChEBI" id="CHEBI:59789"/>
        <dbReference type="ChEBI" id="CHEBI:156461"/>
        <dbReference type="ChEBI" id="CHEBI:167617"/>
        <dbReference type="EC" id="2.1.1.56"/>
    </reaction>
</comment>
<comment type="subcellular location">
    <subcellularLocation>
        <location evidence="2">Virion</location>
    </subcellularLocation>
</comment>
<comment type="similarity">
    <text evidence="2">Belongs to the aquareoviridae outer capsid VP1 protein family.</text>
</comment>
<proteinExistence type="evidence at protein level"/>
<feature type="chain" id="PRO_0000404185" description="Outer capsid protein VP1">
    <location>
        <begin position="1"/>
        <end position="1299"/>
    </location>
</feature>
<organismHost>
    <name type="scientific">Notemigonus crysoleucas</name>
    <name type="common">Golden shiner</name>
    <name type="synonym">Cyprinus crysoleucas</name>
    <dbReference type="NCBI Taxonomy" id="28800"/>
</organismHost>
<organismHost>
    <name type="scientific">Pimephales promelas</name>
    <name type="common">Fathead minnow</name>
    <dbReference type="NCBI Taxonomy" id="90988"/>
</organismHost>
<evidence type="ECO:0000250" key="1"/>
<evidence type="ECO:0000305" key="2"/>
<sequence>MAAVFGIQLVPKLNTSTTRRTFLPLRFDLLLDRLQSTNLHGVLYRALDFNPVDRSATVIQTYPPLNAWSPHPAFIENPLDYRDWTEFIHDRALAFVGVLTQRYPLTQNAQRYTNPLVLGAAFGDFLNARSIDIFLDRLFYGPTQESPITSITKFPYQWTIDFNVTADSVRTPAGCKYITLYGYDPSRPSTPATYGKHRPTYATVFYYSTLPARSRLLANLAAGPTVLEHFDSPTYGPHLLLPQTGDVLGYSSSLISQAALLMVESVMDALRDNANASASTAVTRLDQSYHPVTSFDPSTFNTLLQRATNLALLAVQGVQSESAIPAIPTMSDVRSFVARLMAEGDPQQWFPYRVDQILYWPESPFVPPIGPFYAPFRPVNFPFTTGSYTVVPDASRPLRLLPQYRNATITVQQADDAYEDTALSPLITTHGFCVTGGVSTSIYDISGDPTAYPPAQLVDTPNDYFDRERMARRDLFRRLRAPADRSAIKDRAVFDFLASLVNPTTANPVLDTSFSMAYLGASSAHANADEPVILADIRSGSIPGLPIPRRIVQFGYDVVHGSLLDLSRAVPTGTFGLVYADLDQVEDAGTDMPAANRAAIAMLGTALQMTTAGGVSVLKVNFPTRAFWTQVFNLYATHATTLHLVKPTIVNSSEVFLVFGGRQSNGALRSTTALQRALLSLYARNAAIDRAVTHIPFFGVPDDGTSDLGIDAVRLFDPMFSDAVANLPSNALASLVSRVVPSSIMFTRVPSNGPVSTTIYGKRTFLSNRRRARLRDVPMLITTTLVHQRRFTTPPTFTLFSSEAVPVTTLVAAGYNSFISEQTRNPNLAHLLDLGTGPECRILSLIPPTLQVTMSDARPCAELMASFDPALTAYVQGDYSTAAFWNGIRCDSATAIFTLGAAAAAAGTDLIAFVQQLIPRIVAAGGTRMWLQLNTPLYEVSSLPDLIDIDLRDRVYRFNGGERVEPYADPVPLQQAIAALLPAAALSWHTLSPTCDWLPYIIGVGSPLNLSDINTAISYSRLTPILHIDTTTPPLRVNPVPTPLNQQCAIRITSLDPAAVLSVQHNGVEVIGGTPGNVISVAGAAALQYILANQEFLLQFTPTLPGIFDVFLTTLGQPPVPRGSFTITPPPTTVVLNMPPPGQLDFTDVGNDARITCDPYYQLAVCIFKDGQYVRVNPEKASVVTNAPNRDLHFVLDLADNHVLLYLCDVTPSGLGDRIAFPIVDIYRIAFPRNTPVRASLPYTGGGAHLTSGGNPFMSLTTPPAVLPAGVALAALSTSVATQYPTYTLPAGVYEYVIE</sequence>